<evidence type="ECO:0000269" key="1">
    <source>
    </source>
</evidence>
<evidence type="ECO:0000269" key="2">
    <source>
    </source>
</evidence>
<evidence type="ECO:0000269" key="3">
    <source>
    </source>
</evidence>
<evidence type="ECO:0000305" key="4"/>
<sequence>MSQADISTCSAPQRVFQEAVKKGNTKELHSLLQNMTNCEFNVNSFGPEGQTALHQSVIDGNLELVKLLVKFGADIRLANREGWSALHIAAFGGHQDIVLYLITKAKYSSGAR</sequence>
<accession>Q7T3Y0</accession>
<organism>
    <name type="scientific">Danio rerio</name>
    <name type="common">Zebrafish</name>
    <name type="synonym">Brachydanio rerio</name>
    <dbReference type="NCBI Taxonomy" id="7955"/>
    <lineage>
        <taxon>Eukaryota</taxon>
        <taxon>Metazoa</taxon>
        <taxon>Chordata</taxon>
        <taxon>Craniata</taxon>
        <taxon>Vertebrata</taxon>
        <taxon>Euteleostomi</taxon>
        <taxon>Actinopterygii</taxon>
        <taxon>Neopterygii</taxon>
        <taxon>Teleostei</taxon>
        <taxon>Ostariophysi</taxon>
        <taxon>Cypriniformes</taxon>
        <taxon>Danionidae</taxon>
        <taxon>Danioninae</taxon>
        <taxon>Danio</taxon>
    </lineage>
</organism>
<gene>
    <name type="primary">nrarpa</name>
    <name type="ORF">zgc:100826</name>
</gene>
<feature type="chain" id="PRO_0000325081" description="Notch-regulated ankyrin repeat-containing protein A">
    <location>
        <begin position="1"/>
        <end position="112"/>
    </location>
</feature>
<feature type="repeat" description="ANK 1">
    <location>
        <begin position="48"/>
        <end position="77"/>
    </location>
</feature>
<feature type="repeat" description="ANK 2">
    <location>
        <begin position="81"/>
        <end position="110"/>
    </location>
</feature>
<name>NARPA_DANRE</name>
<dbReference type="EMBL" id="AY187047">
    <property type="protein sequence ID" value="AAO83388.1"/>
    <property type="molecule type" value="mRNA"/>
</dbReference>
<dbReference type="EMBL" id="AF509780">
    <property type="protein sequence ID" value="AAQ08001.1"/>
    <property type="molecule type" value="mRNA"/>
</dbReference>
<dbReference type="EMBL" id="BC077081">
    <property type="protein sequence ID" value="AAH77081.1"/>
    <property type="molecule type" value="mRNA"/>
</dbReference>
<dbReference type="RefSeq" id="NP_852472.1">
    <property type="nucleotide sequence ID" value="NM_181495.3"/>
</dbReference>
<dbReference type="SMR" id="Q7T3Y0"/>
<dbReference type="FunCoup" id="Q7T3Y0">
    <property type="interactions" value="78"/>
</dbReference>
<dbReference type="STRING" id="7955.ENSDARP00000112028"/>
<dbReference type="PaxDb" id="7955-ENSDARP00000112028"/>
<dbReference type="Ensembl" id="ENSDART00000122657">
    <property type="protein sequence ID" value="ENSDARP00000112028"/>
    <property type="gene ID" value="ENSDARG00000091419"/>
</dbReference>
<dbReference type="Ensembl" id="ENSDART00000180568">
    <property type="protein sequence ID" value="ENSDARP00000150495"/>
    <property type="gene ID" value="ENSDARG00000091419"/>
</dbReference>
<dbReference type="Ensembl" id="ENSDART00000193039">
    <property type="protein sequence ID" value="ENSDARP00000145738"/>
    <property type="gene ID" value="ENSDARG00000111485"/>
</dbReference>
<dbReference type="GeneID" id="353224"/>
<dbReference type="KEGG" id="dre:353224"/>
<dbReference type="AGR" id="ZFIN:ZDB-GENE-030515-6"/>
<dbReference type="CTD" id="353224"/>
<dbReference type="ZFIN" id="ZDB-GENE-030515-6">
    <property type="gene designation" value="nrarpa"/>
</dbReference>
<dbReference type="eggNOG" id="KOG0505">
    <property type="taxonomic scope" value="Eukaryota"/>
</dbReference>
<dbReference type="HOGENOM" id="CLU_000134_41_1_1"/>
<dbReference type="InParanoid" id="Q7T3Y0"/>
<dbReference type="OMA" id="MRTETAH"/>
<dbReference type="OrthoDB" id="5314041at2759"/>
<dbReference type="PhylomeDB" id="Q7T3Y0"/>
<dbReference type="PRO" id="PR:Q7T3Y0"/>
<dbReference type="Proteomes" id="UP000000437">
    <property type="component" value="Alternate scaffold 10"/>
</dbReference>
<dbReference type="Proteomes" id="UP000000437">
    <property type="component" value="Chromosome 10"/>
</dbReference>
<dbReference type="Bgee" id="ENSDARG00000091419">
    <property type="expression patterns" value="Expressed in presomitic mesoderm and 27 other cell types or tissues"/>
</dbReference>
<dbReference type="GO" id="GO:0030941">
    <property type="term" value="F:chloroplast targeting sequence binding"/>
    <property type="evidence" value="ECO:0000318"/>
    <property type="project" value="GO_Central"/>
</dbReference>
<dbReference type="GO" id="GO:0002043">
    <property type="term" value="P:blood vessel endothelial cell proliferation involved in sprouting angiogenesis"/>
    <property type="evidence" value="ECO:0000315"/>
    <property type="project" value="ZFIN"/>
</dbReference>
<dbReference type="GO" id="GO:0001569">
    <property type="term" value="P:branching involved in blood vessel morphogenesis"/>
    <property type="evidence" value="ECO:0000315"/>
    <property type="project" value="MGI"/>
</dbReference>
<dbReference type="GO" id="GO:0001755">
    <property type="term" value="P:neural crest cell migration"/>
    <property type="evidence" value="ECO:0000315"/>
    <property type="project" value="ZFIN"/>
</dbReference>
<dbReference type="GO" id="GO:0007219">
    <property type="term" value="P:Notch signaling pathway"/>
    <property type="evidence" value="ECO:0007669"/>
    <property type="project" value="UniProtKB-KW"/>
</dbReference>
<dbReference type="GO" id="GO:0050931">
    <property type="term" value="P:pigment cell differentiation"/>
    <property type="evidence" value="ECO:0000315"/>
    <property type="project" value="ZFIN"/>
</dbReference>
<dbReference type="GO" id="GO:0045036">
    <property type="term" value="P:protein targeting to chloroplast"/>
    <property type="evidence" value="ECO:0000318"/>
    <property type="project" value="GO_Central"/>
</dbReference>
<dbReference type="GO" id="GO:0022407">
    <property type="term" value="P:regulation of cell-cell adhesion"/>
    <property type="evidence" value="ECO:0000315"/>
    <property type="project" value="MGI"/>
</dbReference>
<dbReference type="GO" id="GO:0002040">
    <property type="term" value="P:sprouting angiogenesis"/>
    <property type="evidence" value="ECO:0000315"/>
    <property type="project" value="MGI"/>
</dbReference>
<dbReference type="FunFam" id="1.25.40.20:FF:000085">
    <property type="entry name" value="Notch-regulated ankyrin repeat-containing protein A"/>
    <property type="match status" value="1"/>
</dbReference>
<dbReference type="Gene3D" id="1.25.40.20">
    <property type="entry name" value="Ankyrin repeat-containing domain"/>
    <property type="match status" value="1"/>
</dbReference>
<dbReference type="InterPro" id="IPR002110">
    <property type="entry name" value="Ankyrin_rpt"/>
</dbReference>
<dbReference type="InterPro" id="IPR036770">
    <property type="entry name" value="Ankyrin_rpt-contain_sf"/>
</dbReference>
<dbReference type="InterPro" id="IPR051226">
    <property type="entry name" value="PP1_Regulatory_Subunit"/>
</dbReference>
<dbReference type="PANTHER" id="PTHR24179:SF21">
    <property type="entry name" value="MYOSIN BINDING SUBUNIT, ISOFORM O"/>
    <property type="match status" value="1"/>
</dbReference>
<dbReference type="PANTHER" id="PTHR24179">
    <property type="entry name" value="PROTEIN PHOSPHATASE 1 REGULATORY SUBUNIT 12"/>
    <property type="match status" value="1"/>
</dbReference>
<dbReference type="Pfam" id="PF12796">
    <property type="entry name" value="Ank_2"/>
    <property type="match status" value="1"/>
</dbReference>
<dbReference type="SMART" id="SM00248">
    <property type="entry name" value="ANK"/>
    <property type="match status" value="2"/>
</dbReference>
<dbReference type="SUPFAM" id="SSF48403">
    <property type="entry name" value="Ankyrin repeat"/>
    <property type="match status" value="1"/>
</dbReference>
<dbReference type="PROSITE" id="PS50297">
    <property type="entry name" value="ANK_REP_REGION"/>
    <property type="match status" value="1"/>
</dbReference>
<dbReference type="PROSITE" id="PS50088">
    <property type="entry name" value="ANK_REPEAT"/>
    <property type="match status" value="2"/>
</dbReference>
<protein>
    <recommendedName>
        <fullName>Notch-regulated ankyrin repeat-containing protein A</fullName>
    </recommendedName>
</protein>
<proteinExistence type="evidence at transcript level"/>
<keyword id="KW-0040">ANK repeat</keyword>
<keyword id="KW-0217">Developmental protein</keyword>
<keyword id="KW-0914">Notch signaling pathway</keyword>
<keyword id="KW-1185">Reference proteome</keyword>
<keyword id="KW-0677">Repeat</keyword>
<keyword id="KW-0804">Transcription</keyword>
<keyword id="KW-0805">Transcription regulation</keyword>
<reference key="1">
    <citation type="journal article" date="2003" name="Gene Expr. Patterns">
        <title>Developmentally regulated expression of two members of the Nrarp family in zebrafish.</title>
        <authorList>
            <person name="Topczewska J.M."/>
            <person name="Topczewski J."/>
            <person name="Szostak A."/>
            <person name="Solnica-Krezel L."/>
            <person name="Hogan B.L.M."/>
        </authorList>
    </citation>
    <scope>NUCLEOTIDE SEQUENCE [MRNA]</scope>
    <scope>DEVELOPMENTAL STAGE</scope>
</reference>
<reference key="2">
    <citation type="submission" date="2002-05" db="EMBL/GenBank/DDBJ databases">
        <title>Cloning and functional analysis of two zebrafish nrarp genes.</title>
        <authorList>
            <person name="Tang M."/>
            <person name="Jiang Y.J."/>
        </authorList>
    </citation>
    <scope>NUCLEOTIDE SEQUENCE [MRNA]</scope>
</reference>
<reference key="3">
    <citation type="submission" date="2004-07" db="EMBL/GenBank/DDBJ databases">
        <authorList>
            <consortium name="NIH - Zebrafish Gene Collection (ZGC) project"/>
        </authorList>
    </citation>
    <scope>NUCLEOTIDE SEQUENCE [LARGE SCALE MRNA]</scope>
    <source>
        <tissue>Embryo</tissue>
    </source>
</reference>
<reference key="4">
    <citation type="journal article" date="2005" name="Nat. Cell Biol.">
        <title>Nrarp functions to modulate neural-crest-cell differentiation by regulating LEF1 protein stability.</title>
        <authorList>
            <person name="Ishitani T."/>
            <person name="Matsumoto K."/>
            <person name="Chitnis A.B."/>
            <person name="Itoh M."/>
        </authorList>
    </citation>
    <scope>FUNCTION</scope>
</reference>
<reference key="5">
    <citation type="journal article" date="2009" name="Dev. Cell">
        <title>Nrarp coordinates endothelial Notch and Wnt signaling to control vessel density in angiogenesis.</title>
        <authorList>
            <person name="Phng L.K."/>
            <person name="Potente M."/>
            <person name="Leslie J.D."/>
            <person name="Babbage J."/>
            <person name="Nyqvist D."/>
            <person name="Lobov I."/>
            <person name="Ondr J.K."/>
            <person name="Rao S."/>
            <person name="Lang R.A."/>
            <person name="Thurston G."/>
            <person name="Gerhardt H."/>
        </authorList>
    </citation>
    <scope>FUNCTION</scope>
    <scope>TISSUE SPECIFICITY</scope>
</reference>
<comment type="function">
    <text evidence="2 3">Regulates independently canonical Wnt and Notch signaling by modulating LEF1 and Notch protein turnover. Stabilizes LEF1, a pivotal transcription factor in the Wnt signaling cascade, by blocking its ubiquitination. Involved in angiogenesis; involved in intersegmental vessel patterning during development.</text>
</comment>
<comment type="developmental stage">
    <text evidence="1 3">First detected at low levels in the blastula stage and begins to accumulate in the margin of the blastoderm. At the shield stage, when gastrulation starts, expressed uniformly in the margin. As gastrulation proceeds, expressed at high levels in the posterior paraxial mesoderm. In the 1 day old embryo, at the early pharyngula stage, expression in the developing brain is very strong and expression is restricted to ventral domains of the brain. Expressed in endothelial cells of the intersegmantal vessels, between somite boundaries and in the dorsal aorta.</text>
</comment>
<comment type="similarity">
    <text evidence="4">Belongs to the NRARP family.</text>
</comment>